<keyword id="KW-0408">Iron</keyword>
<keyword id="KW-0521">NADP</keyword>
<keyword id="KW-0560">Oxidoreductase</keyword>
<keyword id="KW-1185">Reference proteome</keyword>
<reference key="1">
    <citation type="journal article" date="2006" name="J. Biol. Chem.">
        <title>Cloning and characterization of deoxymugineic acid synthase genes from graminaceous plants.</title>
        <authorList>
            <person name="Bashir K."/>
            <person name="Inoue H."/>
            <person name="Nagasaka S."/>
            <person name="Takahashi M."/>
            <person name="Nakanishi H."/>
            <person name="Mori S."/>
            <person name="Nishizawa N.K."/>
        </authorList>
    </citation>
    <scope>NUCLEOTIDE SEQUENCE [MRNA]</scope>
    <scope>FUNCTION</scope>
    <scope>PATHWAY</scope>
    <scope>CATALYTIC ACTIVITY</scope>
    <scope>BIOPHYSICOCHEMICAL PROPERTIES</scope>
    <scope>INDUCTION BY IRON-DEFICIENCY</scope>
    <source>
        <strain>cv. Alice</strain>
    </source>
</reference>
<reference key="2">
    <citation type="journal article" date="2009" name="Science">
        <title>The B73 maize genome: complexity, diversity, and dynamics.</title>
        <authorList>
            <person name="Schnable P.S."/>
            <person name="Ware D."/>
            <person name="Fulton R.S."/>
            <person name="Stein J.C."/>
            <person name="Wei F."/>
            <person name="Pasternak S."/>
            <person name="Liang C."/>
            <person name="Zhang J."/>
            <person name="Fulton L."/>
            <person name="Graves T.A."/>
            <person name="Minx P."/>
            <person name="Reily A.D."/>
            <person name="Courtney L."/>
            <person name="Kruchowski S.S."/>
            <person name="Tomlinson C."/>
            <person name="Strong C."/>
            <person name="Delehaunty K."/>
            <person name="Fronick C."/>
            <person name="Courtney B."/>
            <person name="Rock S.M."/>
            <person name="Belter E."/>
            <person name="Du F."/>
            <person name="Kim K."/>
            <person name="Abbott R.M."/>
            <person name="Cotton M."/>
            <person name="Levy A."/>
            <person name="Marchetto P."/>
            <person name="Ochoa K."/>
            <person name="Jackson S.M."/>
            <person name="Gillam B."/>
            <person name="Chen W."/>
            <person name="Yan L."/>
            <person name="Higginbotham J."/>
            <person name="Cardenas M."/>
            <person name="Waligorski J."/>
            <person name="Applebaum E."/>
            <person name="Phelps L."/>
            <person name="Falcone J."/>
            <person name="Kanchi K."/>
            <person name="Thane T."/>
            <person name="Scimone A."/>
            <person name="Thane N."/>
            <person name="Henke J."/>
            <person name="Wang T."/>
            <person name="Ruppert J."/>
            <person name="Shah N."/>
            <person name="Rotter K."/>
            <person name="Hodges J."/>
            <person name="Ingenthron E."/>
            <person name="Cordes M."/>
            <person name="Kohlberg S."/>
            <person name="Sgro J."/>
            <person name="Delgado B."/>
            <person name="Mead K."/>
            <person name="Chinwalla A."/>
            <person name="Leonard S."/>
            <person name="Crouse K."/>
            <person name="Collura K."/>
            <person name="Kudrna D."/>
            <person name="Currie J."/>
            <person name="He R."/>
            <person name="Angelova A."/>
            <person name="Rajasekar S."/>
            <person name="Mueller T."/>
            <person name="Lomeli R."/>
            <person name="Scara G."/>
            <person name="Ko A."/>
            <person name="Delaney K."/>
            <person name="Wissotski M."/>
            <person name="Lopez G."/>
            <person name="Campos D."/>
            <person name="Braidotti M."/>
            <person name="Ashley E."/>
            <person name="Golser W."/>
            <person name="Kim H."/>
            <person name="Lee S."/>
            <person name="Lin J."/>
            <person name="Dujmic Z."/>
            <person name="Kim W."/>
            <person name="Talag J."/>
            <person name="Zuccolo A."/>
            <person name="Fan C."/>
            <person name="Sebastian A."/>
            <person name="Kramer M."/>
            <person name="Spiegel L."/>
            <person name="Nascimento L."/>
            <person name="Zutavern T."/>
            <person name="Miller B."/>
            <person name="Ambroise C."/>
            <person name="Muller S."/>
            <person name="Spooner W."/>
            <person name="Narechania A."/>
            <person name="Ren L."/>
            <person name="Wei S."/>
            <person name="Kumari S."/>
            <person name="Faga B."/>
            <person name="Levy M.J."/>
            <person name="McMahan L."/>
            <person name="Van Buren P."/>
            <person name="Vaughn M.W."/>
            <person name="Ying K."/>
            <person name="Yeh C.-T."/>
            <person name="Emrich S.J."/>
            <person name="Jia Y."/>
            <person name="Kalyanaraman A."/>
            <person name="Hsia A.-P."/>
            <person name="Barbazuk W.B."/>
            <person name="Baucom R.S."/>
            <person name="Brutnell T.P."/>
            <person name="Carpita N.C."/>
            <person name="Chaparro C."/>
            <person name="Chia J.-M."/>
            <person name="Deragon J.-M."/>
            <person name="Estill J.C."/>
            <person name="Fu Y."/>
            <person name="Jeddeloh J.A."/>
            <person name="Han Y."/>
            <person name="Lee H."/>
            <person name="Li P."/>
            <person name="Lisch D.R."/>
            <person name="Liu S."/>
            <person name="Liu Z."/>
            <person name="Nagel D.H."/>
            <person name="McCann M.C."/>
            <person name="SanMiguel P."/>
            <person name="Myers A.M."/>
            <person name="Nettleton D."/>
            <person name="Nguyen J."/>
            <person name="Penning B.W."/>
            <person name="Ponnala L."/>
            <person name="Schneider K.L."/>
            <person name="Schwartz D.C."/>
            <person name="Sharma A."/>
            <person name="Soderlund C."/>
            <person name="Springer N.M."/>
            <person name="Sun Q."/>
            <person name="Wang H."/>
            <person name="Waterman M."/>
            <person name="Westerman R."/>
            <person name="Wolfgruber T.K."/>
            <person name="Yang L."/>
            <person name="Yu Y."/>
            <person name="Zhang L."/>
            <person name="Zhou S."/>
            <person name="Zhu Q."/>
            <person name="Bennetzen J.L."/>
            <person name="Dawe R.K."/>
            <person name="Jiang J."/>
            <person name="Jiang N."/>
            <person name="Presting G.G."/>
            <person name="Wessler S.R."/>
            <person name="Aluru S."/>
            <person name="Martienssen R.A."/>
            <person name="Clifton S.W."/>
            <person name="McCombie W.R."/>
            <person name="Wing R.A."/>
            <person name="Wilson R.K."/>
        </authorList>
    </citation>
    <scope>NUCLEOTIDE SEQUENCE [LARGE SCALE GENOMIC DNA]</scope>
    <source>
        <strain>cv. B73</strain>
        <tissue>Seedling</tissue>
    </source>
</reference>
<reference key="3">
    <citation type="journal article" date="2009" name="PLoS Genet.">
        <title>Sequencing, mapping, and analysis of 27,455 maize full-length cDNAs.</title>
        <authorList>
            <person name="Soderlund C."/>
            <person name="Descour A."/>
            <person name="Kudrna D."/>
            <person name="Bomhoff M."/>
            <person name="Boyd L."/>
            <person name="Currie J."/>
            <person name="Angelova A."/>
            <person name="Collura K."/>
            <person name="Wissotski M."/>
            <person name="Ashley E."/>
            <person name="Morrow D."/>
            <person name="Fernandes J."/>
            <person name="Walbot V."/>
            <person name="Yu Y."/>
        </authorList>
    </citation>
    <scope>NUCLEOTIDE SEQUENCE [LARGE SCALE MRNA]</scope>
    <source>
        <strain>cv. B73</strain>
    </source>
</reference>
<feature type="chain" id="PRO_0000442300" description="Deoxymugineic acid synthase 1">
    <location>
        <begin position="1"/>
        <end position="314"/>
    </location>
</feature>
<feature type="active site" description="Proton donor" evidence="2">
    <location>
        <position position="49"/>
    </location>
</feature>
<feature type="binding site" evidence="1">
    <location>
        <position position="44"/>
    </location>
    <ligand>
        <name>NADP(+)</name>
        <dbReference type="ChEBI" id="CHEBI:58349"/>
    </ligand>
</feature>
<feature type="binding site" evidence="2">
    <location>
        <position position="112"/>
    </location>
    <ligand>
        <name>substrate</name>
    </ligand>
</feature>
<feature type="binding site" evidence="1">
    <location>
        <begin position="158"/>
        <end position="159"/>
    </location>
    <ligand>
        <name>NADP(+)</name>
        <dbReference type="ChEBI" id="CHEBI:58349"/>
    </ligand>
</feature>
<feature type="binding site" evidence="1">
    <location>
        <position position="180"/>
    </location>
    <ligand>
        <name>NADP(+)</name>
        <dbReference type="ChEBI" id="CHEBI:58349"/>
    </ligand>
</feature>
<feature type="binding site" evidence="1">
    <location>
        <begin position="258"/>
        <end position="266"/>
    </location>
    <ligand>
        <name>NADP(+)</name>
        <dbReference type="ChEBI" id="CHEBI:58349"/>
    </ligand>
</feature>
<feature type="binding site" evidence="2">
    <location>
        <begin position="273"/>
        <end position="281"/>
    </location>
    <ligand>
        <name>NADP(+)</name>
        <dbReference type="ChEBI" id="CHEBI:58349"/>
    </ligand>
</feature>
<feature type="sequence conflict" description="In Ref. 1; BAF03164." evidence="5" ref="1">
    <original>I</original>
    <variation>V</variation>
    <location>
        <position position="14"/>
    </location>
</feature>
<feature type="sequence conflict" description="In Ref. 1; BAF03164." evidence="5" ref="1">
    <original>D</original>
    <variation>A</variation>
    <location>
        <position position="311"/>
    </location>
</feature>
<proteinExistence type="evidence at protein level"/>
<accession>B4F9A4</accession>
<accession>Q0PCF2</accession>
<protein>
    <recommendedName>
        <fullName evidence="4">Deoxymugineic acid synthase 1</fullName>
        <shortName evidence="4">ZmDMAS1</shortName>
        <ecNumber evidence="3">1.1.1.285</ecNumber>
    </recommendedName>
</protein>
<comment type="function">
    <text evidence="3">Catalyzes the reduction of a 3''-keto intermediate during the biosynthesis of 2'-deoxymugineic acid (DMA) from L-Met. Involved in the formation of phytosiderophores (MAs) belonging to the mugineic acid family and required to acquire iron.</text>
</comment>
<comment type="catalytic activity">
    <reaction evidence="3">
        <text>2'-deoxymugineate + NAD(+) = 3''-deamino-3''-oxonicotianamine + NADH + H(+)</text>
        <dbReference type="Rhea" id="RHEA:16141"/>
        <dbReference type="ChEBI" id="CHEBI:15378"/>
        <dbReference type="ChEBI" id="CHEBI:57540"/>
        <dbReference type="ChEBI" id="CHEBI:57945"/>
        <dbReference type="ChEBI" id="CHEBI:58487"/>
        <dbReference type="ChEBI" id="CHEBI:58685"/>
        <dbReference type="EC" id="1.1.1.285"/>
    </reaction>
</comment>
<comment type="catalytic activity">
    <reaction evidence="3">
        <text>2'-deoxymugineate + NADP(+) = 3''-deamino-3''-oxonicotianamine + NADPH + H(+)</text>
        <dbReference type="Rhea" id="RHEA:16137"/>
        <dbReference type="ChEBI" id="CHEBI:15378"/>
        <dbReference type="ChEBI" id="CHEBI:57783"/>
        <dbReference type="ChEBI" id="CHEBI:58349"/>
        <dbReference type="ChEBI" id="CHEBI:58487"/>
        <dbReference type="ChEBI" id="CHEBI:58685"/>
        <dbReference type="EC" id="1.1.1.285"/>
    </reaction>
</comment>
<comment type="biophysicochemical properties">
    <phDependence>
        <text evidence="3">Optimum pH is 8-9.</text>
    </phDependence>
</comment>
<comment type="pathway">
    <text evidence="3">Siderophore biosynthesis.</text>
</comment>
<comment type="induction">
    <text evidence="3">Up-regulated under iron-deficient conditions in root tissues.</text>
</comment>
<comment type="similarity">
    <text evidence="5">Belongs to the aldo/keto reductase family.</text>
</comment>
<evidence type="ECO:0000250" key="1">
    <source>
        <dbReference type="UniProtKB" id="O43488"/>
    </source>
</evidence>
<evidence type="ECO:0000250" key="2">
    <source>
        <dbReference type="UniProtKB" id="Q8CG76"/>
    </source>
</evidence>
<evidence type="ECO:0000269" key="3">
    <source>
    </source>
</evidence>
<evidence type="ECO:0000303" key="4">
    <source>
    </source>
</evidence>
<evidence type="ECO:0000305" key="5"/>
<evidence type="ECO:0000312" key="6">
    <source>
        <dbReference type="EMBL" id="ONL95785.1"/>
    </source>
</evidence>
<name>DMAS1_MAIZE</name>
<organism>
    <name type="scientific">Zea mays</name>
    <name type="common">Maize</name>
    <dbReference type="NCBI Taxonomy" id="4577"/>
    <lineage>
        <taxon>Eukaryota</taxon>
        <taxon>Viridiplantae</taxon>
        <taxon>Streptophyta</taxon>
        <taxon>Embryophyta</taxon>
        <taxon>Tracheophyta</taxon>
        <taxon>Spermatophyta</taxon>
        <taxon>Magnoliopsida</taxon>
        <taxon>Liliopsida</taxon>
        <taxon>Poales</taxon>
        <taxon>Poaceae</taxon>
        <taxon>PACMAD clade</taxon>
        <taxon>Panicoideae</taxon>
        <taxon>Andropogonodae</taxon>
        <taxon>Andropogoneae</taxon>
        <taxon>Tripsacinae</taxon>
        <taxon>Zea</taxon>
    </lineage>
</organism>
<sequence>MSATGRAPCGLPRIGLGTAVQGPRPDPVRAAVLRAIQLGYRHFDTAAHYATEAPIGEAAAEAVRTGLVASREDLFVTSKVWCADAHRDRVLPALRRTLSNLQMEYVDLYMVHWPVTMKAGRFTAPFTPEDFEPFDMRAVWEAMEECHRLGLAKAIGVCNFSCKKLETLLSFATIPPVVNQVEINPVWQQRKLREFCRAKGIQLCAYSPLGAKGTHWGSDSVMDSGVLHEIAKSKGKTVAQVCLRWVYEQGDCLIVKSFDEGRMKENLDIVDWELSEEERQRISKIPQRKINQGRRYVSEHGPYKSFEELWDGEI</sequence>
<gene>
    <name evidence="4" type="primary">DMAS1</name>
    <name evidence="6" type="ORF">ZEAMMB73_Zm00001d028360</name>
</gene>
<dbReference type="EC" id="1.1.1.285" evidence="3"/>
<dbReference type="EMBL" id="AB269909">
    <property type="protein sequence ID" value="BAF03164.1"/>
    <property type="molecule type" value="mRNA"/>
</dbReference>
<dbReference type="EMBL" id="CM007647">
    <property type="protein sequence ID" value="ONL95785.1"/>
    <property type="molecule type" value="Genomic_DNA"/>
</dbReference>
<dbReference type="EMBL" id="BT033692">
    <property type="protein sequence ID" value="ACF78697.1"/>
    <property type="molecule type" value="mRNA"/>
</dbReference>
<dbReference type="RefSeq" id="NP_001105931.1">
    <property type="nucleotide sequence ID" value="NM_001112461.1"/>
</dbReference>
<dbReference type="SMR" id="B4F9A4"/>
<dbReference type="FunCoup" id="B4F9A4">
    <property type="interactions" value="59"/>
</dbReference>
<dbReference type="IntAct" id="B4F9A4">
    <property type="interactions" value="78"/>
</dbReference>
<dbReference type="STRING" id="4577.B4F9A4"/>
<dbReference type="PaxDb" id="4577-GRMZM2G060952_P01"/>
<dbReference type="EnsemblPlants" id="Zm00001eb010040_T003">
    <property type="protein sequence ID" value="Zm00001eb010040_P003"/>
    <property type="gene ID" value="Zm00001eb010040"/>
</dbReference>
<dbReference type="GeneID" id="778439"/>
<dbReference type="Gramene" id="Zm00001eb010040_T003">
    <property type="protein sequence ID" value="Zm00001eb010040_P003"/>
    <property type="gene ID" value="Zm00001eb010040"/>
</dbReference>
<dbReference type="KEGG" id="zma:778439"/>
<dbReference type="eggNOG" id="KOG1577">
    <property type="taxonomic scope" value="Eukaryota"/>
</dbReference>
<dbReference type="InParanoid" id="B4F9A4"/>
<dbReference type="OMA" id="LIYGNEH"/>
<dbReference type="OrthoDB" id="416253at2759"/>
<dbReference type="Proteomes" id="UP000007305">
    <property type="component" value="Chromosome 1"/>
</dbReference>
<dbReference type="ExpressionAtlas" id="B4F9A4">
    <property type="expression patterns" value="baseline and differential"/>
</dbReference>
<dbReference type="GO" id="GO:0005829">
    <property type="term" value="C:cytosol"/>
    <property type="evidence" value="ECO:0000318"/>
    <property type="project" value="GO_Central"/>
</dbReference>
<dbReference type="GO" id="GO:0033707">
    <property type="term" value="F:3''-deamino-3''-oxonicotianamine reductase activity"/>
    <property type="evidence" value="ECO:0000314"/>
    <property type="project" value="UniProtKB"/>
</dbReference>
<dbReference type="GO" id="GO:0004032">
    <property type="term" value="F:aldose reductase (NADPH) activity"/>
    <property type="evidence" value="ECO:0000318"/>
    <property type="project" value="GO_Central"/>
</dbReference>
<dbReference type="GO" id="GO:0034224">
    <property type="term" value="P:cellular response to zinc ion starvation"/>
    <property type="evidence" value="ECO:0007669"/>
    <property type="project" value="EnsemblPlants"/>
</dbReference>
<dbReference type="GO" id="GO:1990641">
    <property type="term" value="P:response to iron ion starvation"/>
    <property type="evidence" value="ECO:0000270"/>
    <property type="project" value="UniProtKB"/>
</dbReference>
<dbReference type="GO" id="GO:0019290">
    <property type="term" value="P:siderophore biosynthetic process"/>
    <property type="evidence" value="ECO:0000314"/>
    <property type="project" value="UniProtKB"/>
</dbReference>
<dbReference type="CDD" id="cd19124">
    <property type="entry name" value="AKR_AKR4A_4B"/>
    <property type="match status" value="1"/>
</dbReference>
<dbReference type="FunFam" id="3.20.20.100:FF:000014">
    <property type="entry name" value="NAD(P)-linked oxidoreductase superfamily protein"/>
    <property type="match status" value="1"/>
</dbReference>
<dbReference type="Gene3D" id="3.20.20.100">
    <property type="entry name" value="NADP-dependent oxidoreductase domain"/>
    <property type="match status" value="1"/>
</dbReference>
<dbReference type="InterPro" id="IPR020471">
    <property type="entry name" value="AKR"/>
</dbReference>
<dbReference type="InterPro" id="IPR044497">
    <property type="entry name" value="AKR4A/B"/>
</dbReference>
<dbReference type="InterPro" id="IPR018170">
    <property type="entry name" value="Aldo/ket_reductase_CS"/>
</dbReference>
<dbReference type="InterPro" id="IPR023210">
    <property type="entry name" value="NADP_OxRdtase_dom"/>
</dbReference>
<dbReference type="InterPro" id="IPR036812">
    <property type="entry name" value="NADP_OxRdtase_dom_sf"/>
</dbReference>
<dbReference type="PANTHER" id="PTHR11732">
    <property type="entry name" value="ALDO/KETO REDUCTASE"/>
    <property type="match status" value="1"/>
</dbReference>
<dbReference type="Pfam" id="PF00248">
    <property type="entry name" value="Aldo_ket_red"/>
    <property type="match status" value="1"/>
</dbReference>
<dbReference type="PIRSF" id="PIRSF000097">
    <property type="entry name" value="AKR"/>
    <property type="match status" value="1"/>
</dbReference>
<dbReference type="PRINTS" id="PR00069">
    <property type="entry name" value="ALDKETRDTASE"/>
</dbReference>
<dbReference type="SUPFAM" id="SSF51430">
    <property type="entry name" value="NAD(P)-linked oxidoreductase"/>
    <property type="match status" value="1"/>
</dbReference>
<dbReference type="PROSITE" id="PS00798">
    <property type="entry name" value="ALDOKETO_REDUCTASE_1"/>
    <property type="match status" value="1"/>
</dbReference>
<dbReference type="PROSITE" id="PS00062">
    <property type="entry name" value="ALDOKETO_REDUCTASE_2"/>
    <property type="match status" value="1"/>
</dbReference>
<dbReference type="PROSITE" id="PS00063">
    <property type="entry name" value="ALDOKETO_REDUCTASE_3"/>
    <property type="match status" value="1"/>
</dbReference>